<keyword id="KW-0002">3D-structure</keyword>
<keyword id="KW-0963">Cytoplasm</keyword>
<keyword id="KW-1185">Reference proteome</keyword>
<keyword id="KW-0687">Ribonucleoprotein</keyword>
<keyword id="KW-0689">Ribosomal protein</keyword>
<gene>
    <name type="primary">RPL41</name>
</gene>
<comment type="function">
    <text evidence="2 3 6">Component of the small ribosomal subunit (Probable) (Ref.8). The ribosome is a large ribonucleoprotein complex responsible for the synthesis of proteins in the cell (PubMed:23636399). Interacts with the beta subunit of protein kinase CKII and stimulates phosphorylation of DNA topoisomerase II alpha by CKII (PubMed:9299532).</text>
</comment>
<comment type="subunit">
    <text evidence="6">Component of the small ribosomal subunit.</text>
</comment>
<comment type="interaction">
    <interactant intactId="EBI-2116899">
        <id>P62945</id>
    </interactant>
    <interactant intactId="EBI-742426">
        <id>Q9H190</id>
        <label>SDCBP2</label>
    </interactant>
    <organismsDiffer>false</organismsDiffer>
    <experiments>3</experiments>
</comment>
<comment type="subcellular location">
    <subcellularLocation>
        <location evidence="2">Cytoplasm</location>
    </subcellularLocation>
</comment>
<comment type="miscellaneous">
    <text evidence="6">Initially thought to be part of the large ribosomal subunit. Crystal structures show eS32/eL41 to be a small ribosomal subunit forming a bridge at the interface of the 2 subunits.</text>
</comment>
<comment type="similarity">
    <text evidence="5">Belongs to the eukaryotic ribosomal protein eS32 family.</text>
</comment>
<comment type="caution">
    <text evidence="5">There are multiple pseudogenes of this gene dispersed through the genome.</text>
</comment>
<protein>
    <recommendedName>
        <fullName evidence="6">Small ribosomal subunit protein eS32</fullName>
    </recommendedName>
    <alternativeName>
        <fullName>60S ribosomal protein L41</fullName>
    </alternativeName>
    <alternativeName>
        <fullName>HG12</fullName>
    </alternativeName>
    <alternativeName>
        <fullName evidence="4">Large ribosomal subunit protein eL41</fullName>
    </alternativeName>
</protein>
<accession>P62945</accession>
<accession>A6NG21</accession>
<accession>P28751</accession>
<sequence>MRAKWRKKRMRRLKRKRRKMRQRSK</sequence>
<reference key="1">
    <citation type="journal article" date="1992" name="Biochem. Biophys. Res. Commun.">
        <title>Characterization by cDNA cloning of the mRNA of a highly basic human protein homologous to the yeast ribosomal protein YL41.</title>
        <authorList>
            <person name="Klaudiny J."/>
            <person name="von der Kammer H."/>
            <person name="Scheit K.H."/>
        </authorList>
    </citation>
    <scope>NUCLEOTIDE SEQUENCE [MRNA]</scope>
    <source>
        <tissue>Ovary</tissue>
    </source>
</reference>
<reference key="2">
    <citation type="journal article" date="1997" name="Biochem. Biophys. Res. Commun.">
        <title>The highly basic ribosomal protein L41 interacts with the beta subunit of protein kinase CKII and stimulates phosphorylation of DNA topoisomerase IIalpha by CKII.</title>
        <authorList>
            <person name="Lee J.-H."/>
            <person name="Kim J.-M."/>
            <person name="Kim M.-S."/>
            <person name="Lee Y.-T."/>
            <person name="Marshak D.R."/>
            <person name="Bae Y.-S."/>
        </authorList>
    </citation>
    <scope>NUCLEOTIDE SEQUENCE [MRNA]</scope>
    <scope>FUNCTION</scope>
</reference>
<reference key="3">
    <citation type="submission" date="1998-01" db="EMBL/GenBank/DDBJ databases">
        <title>Characterization of human ribosomal protein L41 genomic structure.</title>
        <authorList>
            <person name="Go H."/>
            <person name="Miyado K."/>
            <person name="Hasuwa H."/>
            <person name="Taniguchi S."/>
        </authorList>
    </citation>
    <scope>NUCLEOTIDE SEQUENCE [GENOMIC DNA]</scope>
</reference>
<reference key="4">
    <citation type="journal article" date="2001" name="Nature">
        <title>The DNA sequence and comparative analysis of human chromosome 20.</title>
        <authorList>
            <person name="Deloukas P."/>
            <person name="Matthews L.H."/>
            <person name="Ashurst J.L."/>
            <person name="Burton J."/>
            <person name="Gilbert J.G.R."/>
            <person name="Jones M."/>
            <person name="Stavrides G."/>
            <person name="Almeida J.P."/>
            <person name="Babbage A.K."/>
            <person name="Bagguley C.L."/>
            <person name="Bailey J."/>
            <person name="Barlow K.F."/>
            <person name="Bates K.N."/>
            <person name="Beard L.M."/>
            <person name="Beare D.M."/>
            <person name="Beasley O.P."/>
            <person name="Bird C.P."/>
            <person name="Blakey S.E."/>
            <person name="Bridgeman A.M."/>
            <person name="Brown A.J."/>
            <person name="Buck D."/>
            <person name="Burrill W.D."/>
            <person name="Butler A.P."/>
            <person name="Carder C."/>
            <person name="Carter N.P."/>
            <person name="Chapman J.C."/>
            <person name="Clamp M."/>
            <person name="Clark G."/>
            <person name="Clark L.N."/>
            <person name="Clark S.Y."/>
            <person name="Clee C.M."/>
            <person name="Clegg S."/>
            <person name="Cobley V.E."/>
            <person name="Collier R.E."/>
            <person name="Connor R.E."/>
            <person name="Corby N.R."/>
            <person name="Coulson A."/>
            <person name="Coville G.J."/>
            <person name="Deadman R."/>
            <person name="Dhami P.D."/>
            <person name="Dunn M."/>
            <person name="Ellington A.G."/>
            <person name="Frankland J.A."/>
            <person name="Fraser A."/>
            <person name="French L."/>
            <person name="Garner P."/>
            <person name="Grafham D.V."/>
            <person name="Griffiths C."/>
            <person name="Griffiths M.N.D."/>
            <person name="Gwilliam R."/>
            <person name="Hall R.E."/>
            <person name="Hammond S."/>
            <person name="Harley J.L."/>
            <person name="Heath P.D."/>
            <person name="Ho S."/>
            <person name="Holden J.L."/>
            <person name="Howden P.J."/>
            <person name="Huckle E."/>
            <person name="Hunt A.R."/>
            <person name="Hunt S.E."/>
            <person name="Jekosch K."/>
            <person name="Johnson C.M."/>
            <person name="Johnson D."/>
            <person name="Kay M.P."/>
            <person name="Kimberley A.M."/>
            <person name="King A."/>
            <person name="Knights A."/>
            <person name="Laird G.K."/>
            <person name="Lawlor S."/>
            <person name="Lehvaeslaiho M.H."/>
            <person name="Leversha M.A."/>
            <person name="Lloyd C."/>
            <person name="Lloyd D.M."/>
            <person name="Lovell J.D."/>
            <person name="Marsh V.L."/>
            <person name="Martin S.L."/>
            <person name="McConnachie L.J."/>
            <person name="McLay K."/>
            <person name="McMurray A.A."/>
            <person name="Milne S.A."/>
            <person name="Mistry D."/>
            <person name="Moore M.J.F."/>
            <person name="Mullikin J.C."/>
            <person name="Nickerson T."/>
            <person name="Oliver K."/>
            <person name="Parker A."/>
            <person name="Patel R."/>
            <person name="Pearce T.A.V."/>
            <person name="Peck A.I."/>
            <person name="Phillimore B.J.C.T."/>
            <person name="Prathalingam S.R."/>
            <person name="Plumb R.W."/>
            <person name="Ramsay H."/>
            <person name="Rice C.M."/>
            <person name="Ross M.T."/>
            <person name="Scott C.E."/>
            <person name="Sehra H.K."/>
            <person name="Shownkeen R."/>
            <person name="Sims S."/>
            <person name="Skuce C.D."/>
            <person name="Smith M.L."/>
            <person name="Soderlund C."/>
            <person name="Steward C.A."/>
            <person name="Sulston J.E."/>
            <person name="Swann R.M."/>
            <person name="Sycamore N."/>
            <person name="Taylor R."/>
            <person name="Tee L."/>
            <person name="Thomas D.W."/>
            <person name="Thorpe A."/>
            <person name="Tracey A."/>
            <person name="Tromans A.C."/>
            <person name="Vaudin M."/>
            <person name="Wall M."/>
            <person name="Wallis J.M."/>
            <person name="Whitehead S.L."/>
            <person name="Whittaker P."/>
            <person name="Willey D.L."/>
            <person name="Williams L."/>
            <person name="Williams S.A."/>
            <person name="Wilming L."/>
            <person name="Wray P.W."/>
            <person name="Hubbard T."/>
            <person name="Durbin R.M."/>
            <person name="Bentley D.R."/>
            <person name="Beck S."/>
            <person name="Rogers J."/>
        </authorList>
    </citation>
    <scope>NUCLEOTIDE SEQUENCE [LARGE SCALE GENOMIC DNA]</scope>
</reference>
<reference key="5">
    <citation type="submission" date="2005-07" db="EMBL/GenBank/DDBJ databases">
        <authorList>
            <person name="Mural R.J."/>
            <person name="Istrail S."/>
            <person name="Sutton G.G."/>
            <person name="Florea L."/>
            <person name="Halpern A.L."/>
            <person name="Mobarry C.M."/>
            <person name="Lippert R."/>
            <person name="Walenz B."/>
            <person name="Shatkay H."/>
            <person name="Dew I."/>
            <person name="Miller J.R."/>
            <person name="Flanigan M.J."/>
            <person name="Edwards N.J."/>
            <person name="Bolanos R."/>
            <person name="Fasulo D."/>
            <person name="Halldorsson B.V."/>
            <person name="Hannenhalli S."/>
            <person name="Turner R."/>
            <person name="Yooseph S."/>
            <person name="Lu F."/>
            <person name="Nusskern D.R."/>
            <person name="Shue B.C."/>
            <person name="Zheng X.H."/>
            <person name="Zhong F."/>
            <person name="Delcher A.L."/>
            <person name="Huson D.H."/>
            <person name="Kravitz S.A."/>
            <person name="Mouchard L."/>
            <person name="Reinert K."/>
            <person name="Remington K.A."/>
            <person name="Clark A.G."/>
            <person name="Waterman M.S."/>
            <person name="Eichler E.E."/>
            <person name="Adams M.D."/>
            <person name="Hunkapiller M.W."/>
            <person name="Myers E.W."/>
            <person name="Venter J.C."/>
        </authorList>
    </citation>
    <scope>NUCLEOTIDE SEQUENCE [LARGE SCALE GENOMIC DNA]</scope>
</reference>
<reference key="6">
    <citation type="journal article" date="2004" name="Genome Res.">
        <title>The status, quality, and expansion of the NIH full-length cDNA project: the Mammalian Gene Collection (MGC).</title>
        <authorList>
            <consortium name="The MGC Project Team"/>
        </authorList>
    </citation>
    <scope>NUCLEOTIDE SEQUENCE [LARGE SCALE MRNA]</scope>
    <source>
        <tissue>Brain</tissue>
        <tissue>Prostate</tissue>
        <tissue>Uterus</tissue>
    </source>
</reference>
<reference key="7">
    <citation type="journal article" date="2014" name="Curr. Opin. Struct. Biol.">
        <title>A new system for naming ribosomal proteins.</title>
        <authorList>
            <person name="Ban N."/>
            <person name="Beckmann R."/>
            <person name="Cate J.H.D."/>
            <person name="Dinman J.D."/>
            <person name="Dragon F."/>
            <person name="Ellis S.R."/>
            <person name="Lafontaine D.L.J."/>
            <person name="Lindahl L."/>
            <person name="Liljas A."/>
            <person name="Lipton J.M."/>
            <person name="McAlear M.A."/>
            <person name="Moore P.B."/>
            <person name="Noller H.F."/>
            <person name="Ortega J."/>
            <person name="Panse V.G."/>
            <person name="Ramakrishnan V."/>
            <person name="Spahn C.M.T."/>
            <person name="Steitz T.A."/>
            <person name="Tchorzewski M."/>
            <person name="Tollervey D."/>
            <person name="Warren A.J."/>
            <person name="Williamson J.R."/>
            <person name="Wilson D."/>
            <person name="Yonath A."/>
            <person name="Yusupov M."/>
        </authorList>
    </citation>
    <scope>NOMENCLATURE</scope>
</reference>
<reference key="8">
    <citation type="unpublished observations" date="2023-10">
        <authorList>
            <person name="Leibundgut M.A."/>
            <person name="Ban N."/>
        </authorList>
    </citation>
    <scope>REVISION OF SUBUNIT</scope>
    <scope>NOMENCLATURE</scope>
</reference>
<reference key="9">
    <citation type="journal article" date="2013" name="Nature">
        <title>Structures of the human and Drosophila 80S ribosome.</title>
        <authorList>
            <person name="Anger A.M."/>
            <person name="Armache J.P."/>
            <person name="Berninghausen O."/>
            <person name="Habeck M."/>
            <person name="Subklewe M."/>
            <person name="Wilson D.N."/>
            <person name="Beckmann R."/>
        </authorList>
    </citation>
    <scope>STRUCTURE BY ELECTRON MICROSCOPY (5.0 ANGSTROMS) OF 80S RIBOSOME</scope>
    <scope>FUNCTION</scope>
    <scope>SUBCELLULAR LOCATION</scope>
    <scope>SUBUNIT</scope>
</reference>
<organism>
    <name type="scientific">Homo sapiens</name>
    <name type="common">Human</name>
    <dbReference type="NCBI Taxonomy" id="9606"/>
    <lineage>
        <taxon>Eukaryota</taxon>
        <taxon>Metazoa</taxon>
        <taxon>Chordata</taxon>
        <taxon>Craniata</taxon>
        <taxon>Vertebrata</taxon>
        <taxon>Euteleostomi</taxon>
        <taxon>Mammalia</taxon>
        <taxon>Eutheria</taxon>
        <taxon>Euarchontoglires</taxon>
        <taxon>Primates</taxon>
        <taxon>Haplorrhini</taxon>
        <taxon>Catarrhini</taxon>
        <taxon>Hominidae</taxon>
        <taxon>Homo</taxon>
    </lineage>
</organism>
<name>RS32_HUMAN</name>
<feature type="chain" id="PRO_0000198055" description="Small ribosomal subunit protein eS32">
    <location>
        <begin position="1"/>
        <end position="25"/>
    </location>
</feature>
<feature type="region of interest" description="Disordered" evidence="1">
    <location>
        <begin position="1"/>
        <end position="25"/>
    </location>
</feature>
<feature type="helix" evidence="7">
    <location>
        <begin position="3"/>
        <end position="18"/>
    </location>
</feature>
<evidence type="ECO:0000256" key="1">
    <source>
        <dbReference type="SAM" id="MobiDB-lite"/>
    </source>
</evidence>
<evidence type="ECO:0000269" key="2">
    <source>
    </source>
</evidence>
<evidence type="ECO:0000269" key="3">
    <source>
    </source>
</evidence>
<evidence type="ECO:0000303" key="4">
    <source>
    </source>
</evidence>
<evidence type="ECO:0000305" key="5"/>
<evidence type="ECO:0000305" key="6">
    <source ref="8"/>
</evidence>
<evidence type="ECO:0007829" key="7">
    <source>
        <dbReference type="PDB" id="7R4X"/>
    </source>
</evidence>
<proteinExistence type="evidence at protein level"/>
<dbReference type="EMBL" id="Z12962">
    <property type="protein sequence ID" value="CAA78306.1"/>
    <property type="molecule type" value="mRNA"/>
</dbReference>
<dbReference type="EMBL" id="AF026844">
    <property type="protein sequence ID" value="AAB82715.1"/>
    <property type="molecule type" value="mRNA"/>
</dbReference>
<dbReference type="EMBL" id="AB010874">
    <property type="protein sequence ID" value="BAA31508.1"/>
    <property type="molecule type" value="Genomic_DNA"/>
</dbReference>
<dbReference type="EMBL" id="AL035562">
    <property type="status" value="NOT_ANNOTATED_CDS"/>
    <property type="molecule type" value="Genomic_DNA"/>
</dbReference>
<dbReference type="EMBL" id="CH471054">
    <property type="protein sequence ID" value="EAW96886.1"/>
    <property type="molecule type" value="Genomic_DNA"/>
</dbReference>
<dbReference type="EMBL" id="BC014383">
    <property type="status" value="NOT_ANNOTATED_CDS"/>
    <property type="molecule type" value="mRNA"/>
</dbReference>
<dbReference type="EMBL" id="BC017820">
    <property type="status" value="NOT_ANNOTATED_CDS"/>
    <property type="molecule type" value="mRNA"/>
</dbReference>
<dbReference type="EMBL" id="BC032611">
    <property type="status" value="NOT_ANNOTATED_CDS"/>
    <property type="molecule type" value="mRNA"/>
</dbReference>
<dbReference type="CCDS" id="CCDS44919.1"/>
<dbReference type="PIR" id="JQ1617">
    <property type="entry name" value="JQ1617"/>
</dbReference>
<dbReference type="RefSeq" id="NP_001030344.1">
    <property type="nucleotide sequence ID" value="NM_001035267.2"/>
</dbReference>
<dbReference type="RefSeq" id="NP_066927.1">
    <property type="nucleotide sequence ID" value="NM_021104.2"/>
</dbReference>
<dbReference type="PDB" id="4UG0">
    <property type="method" value="EM"/>
    <property type="chains" value="Ln=1-25"/>
</dbReference>
<dbReference type="PDB" id="4V6X">
    <property type="method" value="EM"/>
    <property type="resolution" value="5.00 A"/>
    <property type="chains" value="Cn=1-25"/>
</dbReference>
<dbReference type="PDB" id="5A2Q">
    <property type="method" value="EM"/>
    <property type="resolution" value="3.90 A"/>
    <property type="chains" value="h=2-25"/>
</dbReference>
<dbReference type="PDB" id="5AJ0">
    <property type="method" value="EM"/>
    <property type="resolution" value="3.50 A"/>
    <property type="chains" value="An=1-25"/>
</dbReference>
<dbReference type="PDB" id="5LKS">
    <property type="method" value="EM"/>
    <property type="resolution" value="3.60 A"/>
    <property type="chains" value="Ln=1-25"/>
</dbReference>
<dbReference type="PDB" id="5OA3">
    <property type="method" value="EM"/>
    <property type="resolution" value="4.30 A"/>
    <property type="chains" value="h=2-25"/>
</dbReference>
<dbReference type="PDB" id="5VYC">
    <property type="method" value="X-ray"/>
    <property type="resolution" value="6.00 A"/>
    <property type="chains" value="j1/j2/j3/j4/j5/j6=1-25"/>
</dbReference>
<dbReference type="PDB" id="6G5H">
    <property type="method" value="EM"/>
    <property type="resolution" value="3.60 A"/>
    <property type="chains" value="h=1-25"/>
</dbReference>
<dbReference type="PDB" id="6IP5">
    <property type="method" value="EM"/>
    <property type="resolution" value="3.90 A"/>
    <property type="chains" value="2h=1-25"/>
</dbReference>
<dbReference type="PDB" id="6IP6">
    <property type="method" value="EM"/>
    <property type="resolution" value="4.50 A"/>
    <property type="chains" value="2h=1-25"/>
</dbReference>
<dbReference type="PDB" id="6IP8">
    <property type="method" value="EM"/>
    <property type="resolution" value="3.90 A"/>
    <property type="chains" value="2h=1-25"/>
</dbReference>
<dbReference type="PDB" id="6OLE">
    <property type="method" value="EM"/>
    <property type="resolution" value="3.10 A"/>
    <property type="chains" value="o=1-25"/>
</dbReference>
<dbReference type="PDB" id="6OLF">
    <property type="method" value="EM"/>
    <property type="resolution" value="3.90 A"/>
    <property type="chains" value="o=1-25"/>
</dbReference>
<dbReference type="PDB" id="6OLG">
    <property type="method" value="EM"/>
    <property type="resolution" value="3.40 A"/>
    <property type="chains" value="An=1-25"/>
</dbReference>
<dbReference type="PDB" id="6OLI">
    <property type="method" value="EM"/>
    <property type="resolution" value="3.50 A"/>
    <property type="chains" value="o=1-25"/>
</dbReference>
<dbReference type="PDB" id="6OLZ">
    <property type="method" value="EM"/>
    <property type="resolution" value="3.90 A"/>
    <property type="chains" value="An=1-25"/>
</dbReference>
<dbReference type="PDB" id="6OM0">
    <property type="method" value="EM"/>
    <property type="resolution" value="3.10 A"/>
    <property type="chains" value="o=1-25"/>
</dbReference>
<dbReference type="PDB" id="6OM7">
    <property type="method" value="EM"/>
    <property type="resolution" value="3.70 A"/>
    <property type="chains" value="o=1-25"/>
</dbReference>
<dbReference type="PDB" id="6QZP">
    <property type="method" value="EM"/>
    <property type="resolution" value="2.90 A"/>
    <property type="chains" value="Ln=1-24"/>
</dbReference>
<dbReference type="PDB" id="6W6L">
    <property type="method" value="EM"/>
    <property type="resolution" value="3.84 A"/>
    <property type="chains" value="o=1-25"/>
</dbReference>
<dbReference type="PDB" id="6XA1">
    <property type="method" value="EM"/>
    <property type="resolution" value="2.80 A"/>
    <property type="chains" value="Ln=1-24"/>
</dbReference>
<dbReference type="PDB" id="6Y0G">
    <property type="method" value="EM"/>
    <property type="resolution" value="3.20 A"/>
    <property type="chains" value="Ln=1-25"/>
</dbReference>
<dbReference type="PDB" id="6Y2L">
    <property type="method" value="EM"/>
    <property type="resolution" value="3.00 A"/>
    <property type="chains" value="Ln=1-25"/>
</dbReference>
<dbReference type="PDB" id="6Y57">
    <property type="method" value="EM"/>
    <property type="resolution" value="3.50 A"/>
    <property type="chains" value="Ln=1-25"/>
</dbReference>
<dbReference type="PDB" id="6Y6X">
    <property type="method" value="EM"/>
    <property type="resolution" value="2.80 A"/>
    <property type="chains" value="Ln=1-24"/>
</dbReference>
<dbReference type="PDB" id="6YBW">
    <property type="method" value="EM"/>
    <property type="resolution" value="3.10 A"/>
    <property type="chains" value="9=1-25"/>
</dbReference>
<dbReference type="PDB" id="6Z6L">
    <property type="method" value="EM"/>
    <property type="resolution" value="3.00 A"/>
    <property type="chains" value="Ln=1-25"/>
</dbReference>
<dbReference type="PDB" id="6Z6M">
    <property type="method" value="EM"/>
    <property type="resolution" value="3.10 A"/>
    <property type="chains" value="Ln=1-25"/>
</dbReference>
<dbReference type="PDB" id="6Z6N">
    <property type="method" value="EM"/>
    <property type="resolution" value="2.90 A"/>
    <property type="chains" value="Ln=1-25"/>
</dbReference>
<dbReference type="PDB" id="6ZLW">
    <property type="method" value="EM"/>
    <property type="resolution" value="2.60 A"/>
    <property type="chains" value="h=1-25"/>
</dbReference>
<dbReference type="PDB" id="6ZM7">
    <property type="method" value="EM"/>
    <property type="resolution" value="2.70 A"/>
    <property type="chains" value="Ln=1-25"/>
</dbReference>
<dbReference type="PDB" id="6ZME">
    <property type="method" value="EM"/>
    <property type="resolution" value="3.00 A"/>
    <property type="chains" value="Ln=1-25"/>
</dbReference>
<dbReference type="PDB" id="6ZMI">
    <property type="method" value="EM"/>
    <property type="resolution" value="2.60 A"/>
    <property type="chains" value="Ln=1-25"/>
</dbReference>
<dbReference type="PDB" id="6ZMO">
    <property type="method" value="EM"/>
    <property type="resolution" value="3.10 A"/>
    <property type="chains" value="Ln=1-25"/>
</dbReference>
<dbReference type="PDB" id="6ZMW">
    <property type="method" value="EM"/>
    <property type="resolution" value="3.70 A"/>
    <property type="chains" value="9=1-25"/>
</dbReference>
<dbReference type="PDB" id="6ZOJ">
    <property type="method" value="EM"/>
    <property type="resolution" value="2.80 A"/>
    <property type="chains" value="h=1-25"/>
</dbReference>
<dbReference type="PDB" id="6ZOK">
    <property type="method" value="EM"/>
    <property type="resolution" value="2.80 A"/>
    <property type="chains" value="h=1-25"/>
</dbReference>
<dbReference type="PDB" id="6ZON">
    <property type="method" value="EM"/>
    <property type="resolution" value="3.00 A"/>
    <property type="chains" value="W=1-25"/>
</dbReference>
<dbReference type="PDB" id="6ZP4">
    <property type="method" value="EM"/>
    <property type="resolution" value="2.90 A"/>
    <property type="chains" value="W=1-25"/>
</dbReference>
<dbReference type="PDB" id="6ZVJ">
    <property type="method" value="EM"/>
    <property type="resolution" value="3.80 A"/>
    <property type="chains" value="W=1-24"/>
</dbReference>
<dbReference type="PDB" id="7A09">
    <property type="method" value="EM"/>
    <property type="resolution" value="3.50 A"/>
    <property type="chains" value="W=1-25"/>
</dbReference>
<dbReference type="PDB" id="7F5S">
    <property type="method" value="EM"/>
    <property type="resolution" value="2.72 A"/>
    <property type="chains" value="Ln=1-25"/>
</dbReference>
<dbReference type="PDB" id="7K5I">
    <property type="method" value="EM"/>
    <property type="resolution" value="2.90 A"/>
    <property type="chains" value="h=1-25"/>
</dbReference>
<dbReference type="PDB" id="7QP6">
    <property type="method" value="EM"/>
    <property type="resolution" value="4.70 A"/>
    <property type="chains" value="9=1-25"/>
</dbReference>
<dbReference type="PDB" id="7QP7">
    <property type="method" value="EM"/>
    <property type="resolution" value="3.70 A"/>
    <property type="chains" value="9=1-25"/>
</dbReference>
<dbReference type="PDB" id="7QVP">
    <property type="method" value="EM"/>
    <property type="resolution" value="3.00 A"/>
    <property type="chains" value="Ln/Mn=1-25"/>
</dbReference>
<dbReference type="PDB" id="7R4X">
    <property type="method" value="EM"/>
    <property type="resolution" value="2.15 A"/>
    <property type="chains" value="n=1-25"/>
</dbReference>
<dbReference type="PDB" id="7TQL">
    <property type="method" value="EM"/>
    <property type="resolution" value="3.40 A"/>
    <property type="chains" value="h=1-19"/>
</dbReference>
<dbReference type="PDB" id="7XNX">
    <property type="method" value="EM"/>
    <property type="resolution" value="2.70 A"/>
    <property type="chains" value="Ln=1-25"/>
</dbReference>
<dbReference type="PDB" id="7XNY">
    <property type="method" value="EM"/>
    <property type="resolution" value="2.50 A"/>
    <property type="chains" value="Ln=1-25"/>
</dbReference>
<dbReference type="PDB" id="8G5Y">
    <property type="method" value="EM"/>
    <property type="resolution" value="2.29 A"/>
    <property type="chains" value="Ln=1-25"/>
</dbReference>
<dbReference type="PDB" id="8G5Z">
    <property type="method" value="EM"/>
    <property type="resolution" value="2.64 A"/>
    <property type="chains" value="Ln=1-25"/>
</dbReference>
<dbReference type="PDB" id="8G60">
    <property type="method" value="EM"/>
    <property type="resolution" value="2.54 A"/>
    <property type="chains" value="Ln=1-25"/>
</dbReference>
<dbReference type="PDB" id="8G61">
    <property type="method" value="EM"/>
    <property type="resolution" value="2.94 A"/>
    <property type="chains" value="Ln=1-25"/>
</dbReference>
<dbReference type="PDB" id="8G6J">
    <property type="method" value="EM"/>
    <property type="resolution" value="2.80 A"/>
    <property type="chains" value="Ln=1-25"/>
</dbReference>
<dbReference type="PDB" id="8GLP">
    <property type="method" value="EM"/>
    <property type="resolution" value="1.67 A"/>
    <property type="chains" value="Ln=1-25"/>
</dbReference>
<dbReference type="PDB" id="8IFD">
    <property type="method" value="EM"/>
    <property type="resolution" value="2.59 A"/>
    <property type="chains" value="2h=1-25"/>
</dbReference>
<dbReference type="PDB" id="8IFE">
    <property type="method" value="EM"/>
    <property type="resolution" value="2.57 A"/>
    <property type="chains" value="2h=1-25"/>
</dbReference>
<dbReference type="PDB" id="8JDJ">
    <property type="method" value="EM"/>
    <property type="resolution" value="2.50 A"/>
    <property type="chains" value="s=1-25"/>
</dbReference>
<dbReference type="PDB" id="8JDK">
    <property type="method" value="EM"/>
    <property type="resolution" value="2.26 A"/>
    <property type="chains" value="s=1-25"/>
</dbReference>
<dbReference type="PDB" id="8JDL">
    <property type="method" value="EM"/>
    <property type="resolution" value="2.42 A"/>
    <property type="chains" value="s=1-25"/>
</dbReference>
<dbReference type="PDB" id="8JDM">
    <property type="method" value="EM"/>
    <property type="resolution" value="2.67 A"/>
    <property type="chains" value="s=1-25"/>
</dbReference>
<dbReference type="PDB" id="8K2C">
    <property type="method" value="EM"/>
    <property type="resolution" value="2.40 A"/>
    <property type="chains" value="Ln=1-25"/>
</dbReference>
<dbReference type="PDB" id="8OZ0">
    <property type="method" value="EM"/>
    <property type="resolution" value="3.50 A"/>
    <property type="chains" value="9=1-25"/>
</dbReference>
<dbReference type="PDB" id="8PJ1">
    <property type="method" value="EM"/>
    <property type="resolution" value="3.40 A"/>
    <property type="chains" value="9=1-25"/>
</dbReference>
<dbReference type="PDB" id="8PJ2">
    <property type="method" value="EM"/>
    <property type="resolution" value="3.40 A"/>
    <property type="chains" value="9=1-25"/>
</dbReference>
<dbReference type="PDB" id="8PJ3">
    <property type="method" value="EM"/>
    <property type="resolution" value="3.70 A"/>
    <property type="chains" value="9=1-25"/>
</dbReference>
<dbReference type="PDB" id="8PJ4">
    <property type="method" value="EM"/>
    <property type="resolution" value="3.20 A"/>
    <property type="chains" value="9=1-25"/>
</dbReference>
<dbReference type="PDB" id="8PJ5">
    <property type="method" value="EM"/>
    <property type="resolution" value="2.90 A"/>
    <property type="chains" value="9=1-25"/>
</dbReference>
<dbReference type="PDB" id="8PJ6">
    <property type="method" value="EM"/>
    <property type="resolution" value="2.90 A"/>
    <property type="chains" value="9=1-25"/>
</dbReference>
<dbReference type="PDB" id="8PPK">
    <property type="method" value="EM"/>
    <property type="resolution" value="2.98 A"/>
    <property type="chains" value="h=1-25"/>
</dbReference>
<dbReference type="PDB" id="8PPL">
    <property type="method" value="EM"/>
    <property type="resolution" value="2.65 A"/>
    <property type="chains" value="Ah=1-25"/>
</dbReference>
<dbReference type="PDB" id="8QOI">
    <property type="method" value="EM"/>
    <property type="resolution" value="1.90 A"/>
    <property type="chains" value="Ln=1-25"/>
</dbReference>
<dbReference type="PDB" id="8T4S">
    <property type="method" value="EM"/>
    <property type="resolution" value="2.60 A"/>
    <property type="chains" value="h=1-25"/>
</dbReference>
<dbReference type="PDB" id="8UKB">
    <property type="method" value="EM"/>
    <property type="resolution" value="3.05 A"/>
    <property type="chains" value="Ln=1-24"/>
</dbReference>
<dbReference type="PDB" id="8XP2">
    <property type="method" value="EM"/>
    <property type="resolution" value="3.20 A"/>
    <property type="chains" value="Ln=1-25"/>
</dbReference>
<dbReference type="PDB" id="8XP3">
    <property type="method" value="EM"/>
    <property type="resolution" value="3.40 A"/>
    <property type="chains" value="Ln=1-25"/>
</dbReference>
<dbReference type="PDB" id="8XSX">
    <property type="method" value="EM"/>
    <property type="resolution" value="2.40 A"/>
    <property type="chains" value="Ln=1-25"/>
</dbReference>
<dbReference type="PDB" id="8XSY">
    <property type="method" value="EM"/>
    <property type="resolution" value="3.00 A"/>
    <property type="chains" value="Ln=1-25"/>
</dbReference>
<dbReference type="PDB" id="8XSZ">
    <property type="method" value="EM"/>
    <property type="resolution" value="3.20 A"/>
    <property type="chains" value="Ln=1-25"/>
</dbReference>
<dbReference type="PDB" id="8XXL">
    <property type="method" value="EM"/>
    <property type="resolution" value="2.90 A"/>
    <property type="chains" value="Ln=1-25"/>
</dbReference>
<dbReference type="PDB" id="8XXM">
    <property type="method" value="EM"/>
    <property type="resolution" value="3.20 A"/>
    <property type="chains" value="Ln=1-25"/>
</dbReference>
<dbReference type="PDB" id="8XXN">
    <property type="method" value="EM"/>
    <property type="resolution" value="3.60 A"/>
    <property type="chains" value="Ln=1-25"/>
</dbReference>
<dbReference type="PDB" id="8Y0W">
    <property type="method" value="EM"/>
    <property type="resolution" value="3.40 A"/>
    <property type="chains" value="Ln=1-25"/>
</dbReference>
<dbReference type="PDB" id="8Y0X">
    <property type="method" value="EM"/>
    <property type="resolution" value="3.30 A"/>
    <property type="chains" value="Ln=1-25"/>
</dbReference>
<dbReference type="PDB" id="8YOO">
    <property type="method" value="EM"/>
    <property type="resolution" value="2.00 A"/>
    <property type="chains" value="Ln=1-25"/>
</dbReference>
<dbReference type="PDB" id="8YOP">
    <property type="method" value="EM"/>
    <property type="resolution" value="2.20 A"/>
    <property type="chains" value="Ln=1-25"/>
</dbReference>
<dbReference type="PDB" id="8ZDB">
    <property type="method" value="EM"/>
    <property type="resolution" value="3.60 A"/>
    <property type="chains" value="h=1-25"/>
</dbReference>
<dbReference type="PDB" id="9BKD">
    <property type="method" value="EM"/>
    <property type="resolution" value="2.60 A"/>
    <property type="chains" value="9=1-25"/>
</dbReference>
<dbReference type="PDB" id="9BLN">
    <property type="method" value="EM"/>
    <property type="resolution" value="3.90 A"/>
    <property type="chains" value="9=1-25"/>
</dbReference>
<dbReference type="PDB" id="9C3H">
    <property type="method" value="EM"/>
    <property type="resolution" value="2.00 A"/>
    <property type="chains" value="So=1-25"/>
</dbReference>
<dbReference type="PDB" id="9G8M">
    <property type="method" value="EM"/>
    <property type="resolution" value="3.30 A"/>
    <property type="chains" value="Ln=1-25"/>
</dbReference>
<dbReference type="PDB" id="9G8O">
    <property type="method" value="EM"/>
    <property type="resolution" value="3.40 A"/>
    <property type="chains" value="Ln=1-25"/>
</dbReference>
<dbReference type="PDBsum" id="4UG0"/>
<dbReference type="PDBsum" id="4V6X"/>
<dbReference type="PDBsum" id="5A2Q"/>
<dbReference type="PDBsum" id="5AJ0"/>
<dbReference type="PDBsum" id="5LKS"/>
<dbReference type="PDBsum" id="5OA3"/>
<dbReference type="PDBsum" id="5VYC"/>
<dbReference type="PDBsum" id="6G5H"/>
<dbReference type="PDBsum" id="6IP5"/>
<dbReference type="PDBsum" id="6IP6"/>
<dbReference type="PDBsum" id="6IP8"/>
<dbReference type="PDBsum" id="6OLE"/>
<dbReference type="PDBsum" id="6OLF"/>
<dbReference type="PDBsum" id="6OLG"/>
<dbReference type="PDBsum" id="6OLI"/>
<dbReference type="PDBsum" id="6OLZ"/>
<dbReference type="PDBsum" id="6OM0"/>
<dbReference type="PDBsum" id="6OM7"/>
<dbReference type="PDBsum" id="6QZP"/>
<dbReference type="PDBsum" id="6W6L"/>
<dbReference type="PDBsum" id="6XA1"/>
<dbReference type="PDBsum" id="6Y0G"/>
<dbReference type="PDBsum" id="6Y2L"/>
<dbReference type="PDBsum" id="6Y57"/>
<dbReference type="PDBsum" id="6Y6X"/>
<dbReference type="PDBsum" id="6YBW"/>
<dbReference type="PDBsum" id="6Z6L"/>
<dbReference type="PDBsum" id="6Z6M"/>
<dbReference type="PDBsum" id="6Z6N"/>
<dbReference type="PDBsum" id="6ZLW"/>
<dbReference type="PDBsum" id="6ZM7"/>
<dbReference type="PDBsum" id="6ZME"/>
<dbReference type="PDBsum" id="6ZMI"/>
<dbReference type="PDBsum" id="6ZMO"/>
<dbReference type="PDBsum" id="6ZMW"/>
<dbReference type="PDBsum" id="6ZOJ"/>
<dbReference type="PDBsum" id="6ZOK"/>
<dbReference type="PDBsum" id="6ZON"/>
<dbReference type="PDBsum" id="6ZP4"/>
<dbReference type="PDBsum" id="6ZVJ"/>
<dbReference type="PDBsum" id="7A09"/>
<dbReference type="PDBsum" id="7F5S"/>
<dbReference type="PDBsum" id="7K5I"/>
<dbReference type="PDBsum" id="7QP6"/>
<dbReference type="PDBsum" id="7QP7"/>
<dbReference type="PDBsum" id="7QVP"/>
<dbReference type="PDBsum" id="7R4X"/>
<dbReference type="PDBsum" id="7TQL"/>
<dbReference type="PDBsum" id="7XNX"/>
<dbReference type="PDBsum" id="7XNY"/>
<dbReference type="PDBsum" id="8G5Y"/>
<dbReference type="PDBsum" id="8G5Z"/>
<dbReference type="PDBsum" id="8G60"/>
<dbReference type="PDBsum" id="8G61"/>
<dbReference type="PDBsum" id="8G6J"/>
<dbReference type="PDBsum" id="8GLP"/>
<dbReference type="PDBsum" id="8IFD"/>
<dbReference type="PDBsum" id="8IFE"/>
<dbReference type="PDBsum" id="8JDJ"/>
<dbReference type="PDBsum" id="8JDK"/>
<dbReference type="PDBsum" id="8JDL"/>
<dbReference type="PDBsum" id="8JDM"/>
<dbReference type="PDBsum" id="8K2C"/>
<dbReference type="PDBsum" id="8OZ0"/>
<dbReference type="PDBsum" id="8PJ1"/>
<dbReference type="PDBsum" id="8PJ2"/>
<dbReference type="PDBsum" id="8PJ3"/>
<dbReference type="PDBsum" id="8PJ4"/>
<dbReference type="PDBsum" id="8PJ5"/>
<dbReference type="PDBsum" id="8PJ6"/>
<dbReference type="PDBsum" id="8PPK"/>
<dbReference type="PDBsum" id="8PPL"/>
<dbReference type="PDBsum" id="8QOI"/>
<dbReference type="PDBsum" id="8T4S"/>
<dbReference type="PDBsum" id="8UKB"/>
<dbReference type="PDBsum" id="8XP2"/>
<dbReference type="PDBsum" id="8XP3"/>
<dbReference type="PDBsum" id="8XSX"/>
<dbReference type="PDBsum" id="8XSY"/>
<dbReference type="PDBsum" id="8XSZ"/>
<dbReference type="PDBsum" id="8XXL"/>
<dbReference type="PDBsum" id="8XXM"/>
<dbReference type="PDBsum" id="8XXN"/>
<dbReference type="PDBsum" id="8Y0W"/>
<dbReference type="PDBsum" id="8Y0X"/>
<dbReference type="PDBsum" id="8YOO"/>
<dbReference type="PDBsum" id="8YOP"/>
<dbReference type="PDBsum" id="8ZDB"/>
<dbReference type="PDBsum" id="9BKD"/>
<dbReference type="PDBsum" id="9BLN"/>
<dbReference type="PDBsum" id="9C3H"/>
<dbReference type="PDBsum" id="9G8M"/>
<dbReference type="PDBsum" id="9G8O"/>
<dbReference type="EMDB" id="EMD-10668"/>
<dbReference type="EMDB" id="EMD-10674"/>
<dbReference type="EMDB" id="EMD-10690"/>
<dbReference type="EMDB" id="EMD-10709"/>
<dbReference type="EMDB" id="EMD-10775"/>
<dbReference type="EMDB" id="EMD-11098"/>
<dbReference type="EMDB" id="EMD-11099"/>
<dbReference type="EMDB" id="EMD-11100"/>
<dbReference type="EMDB" id="EMD-11276"/>
<dbReference type="EMDB" id="EMD-11288"/>
<dbReference type="EMDB" id="EMD-11289"/>
<dbReference type="EMDB" id="EMD-11292"/>
<dbReference type="EMDB" id="EMD-11299"/>
<dbReference type="EMDB" id="EMD-11302"/>
<dbReference type="EMDB" id="EMD-11320"/>
<dbReference type="EMDB" id="EMD-11321"/>
<dbReference type="EMDB" id="EMD-11325"/>
<dbReference type="EMDB" id="EMD-11335"/>
<dbReference type="EMDB" id="EMD-11458"/>
<dbReference type="EMDB" id="EMD-11602"/>
<dbReference type="EMDB" id="EMD-14113"/>
<dbReference type="EMDB" id="EMD-14114"/>
<dbReference type="EMDB" id="EMD-14181"/>
<dbReference type="EMDB" id="EMD-14317"/>
<dbReference type="EMDB" id="EMD-17297"/>
<dbReference type="EMDB" id="EMD-17696"/>
<dbReference type="EMDB" id="EMD-17697"/>
<dbReference type="EMDB" id="EMD-17698"/>
<dbReference type="EMDB" id="EMD-17699"/>
<dbReference type="EMDB" id="EMD-17700"/>
<dbReference type="EMDB" id="EMD-17701"/>
<dbReference type="EMDB" id="EMD-17804"/>
<dbReference type="EMDB" id="EMD-17805"/>
<dbReference type="EMDB" id="EMD-18539"/>
<dbReference type="EMDB" id="EMD-22681"/>
<dbReference type="EMDB" id="EMD-26067"/>
<dbReference type="EMDB" id="EMD-29757"/>
<dbReference type="EMDB" id="EMD-29758"/>
<dbReference type="EMDB" id="EMD-29759"/>
<dbReference type="EMDB" id="EMD-29760"/>
<dbReference type="EMDB" id="EMD-29771"/>
<dbReference type="EMDB" id="EMD-31465"/>
<dbReference type="EMDB" id="EMD-33329"/>
<dbReference type="EMDB" id="EMD-33330"/>
<dbReference type="EMDB" id="EMD-35413"/>
<dbReference type="EMDB" id="EMD-35414"/>
<dbReference type="EMDB" id="EMD-36178"/>
<dbReference type="EMDB" id="EMD-36179"/>
<dbReference type="EMDB" id="EMD-36180"/>
<dbReference type="EMDB" id="EMD-36181"/>
<dbReference type="EMDB" id="EMD-36838"/>
<dbReference type="EMDB" id="EMD-3770"/>
<dbReference type="EMDB" id="EMD-38548"/>
<dbReference type="EMDB" id="EMD-38549"/>
<dbReference type="EMDB" id="EMD-38629"/>
<dbReference type="EMDB" id="EMD-38630"/>
<dbReference type="EMDB" id="EMD-38631"/>
<dbReference type="EMDB" id="EMD-38752"/>
<dbReference type="EMDB" id="EMD-38753"/>
<dbReference type="EMDB" id="EMD-38754"/>
<dbReference type="EMDB" id="EMD-39455"/>
<dbReference type="EMDB" id="EMD-39456"/>
<dbReference type="EMDB" id="EMD-39956"/>
<dbReference type="EMDB" id="EMD-40205"/>
<dbReference type="EMDB" id="EMD-4070"/>
<dbReference type="EMDB" id="EMD-41039"/>
<dbReference type="EMDB" id="EMD-42351"/>
<dbReference type="EMDB" id="EMD-4352"/>
<dbReference type="EMDB" id="EMD-44641"/>
<dbReference type="EMDB" id="EMD-44671"/>
<dbReference type="EMDB" id="EMD-45170"/>
<dbReference type="EMDB" id="EMD-51132"/>
<dbReference type="EMDB" id="EMD-51134"/>
<dbReference type="EMDB" id="EMD-9701"/>
<dbReference type="EMDB" id="EMD-9702"/>
<dbReference type="EMDB" id="EMD-9703"/>
<dbReference type="SMR" id="P62945"/>
<dbReference type="BioGRID" id="112090">
    <property type="interactions" value="10"/>
</dbReference>
<dbReference type="ComplexPortal" id="CPX-5183">
    <property type="entry name" value="60S cytosolic large ribosomal subunit"/>
</dbReference>
<dbReference type="ComplexPortal" id="CPX-7664">
    <property type="entry name" value="60S cytosolic large ribosomal subunit, testis-specific variant"/>
</dbReference>
<dbReference type="ComplexPortal" id="CPX-7665">
    <property type="entry name" value="60S cytosolic large ribosomal subunit, striated muscle variant"/>
</dbReference>
<dbReference type="CORUM" id="P62945"/>
<dbReference type="DIP" id="DIP-46893N"/>
<dbReference type="FunCoup" id="P62945">
    <property type="interactions" value="140"/>
</dbReference>
<dbReference type="IntAct" id="P62945">
    <property type="interactions" value="10"/>
</dbReference>
<dbReference type="BioMuta" id="RPL41"/>
<dbReference type="PeptideAtlas" id="P62945"/>
<dbReference type="Antibodypedia" id="66183">
    <property type="antibodies" value="11 antibodies from 8 providers"/>
</dbReference>
<dbReference type="DNASU" id="6171"/>
<dbReference type="Ensembl" id="ENST00000501597.3">
    <property type="protein sequence ID" value="ENSP00000420821.3"/>
    <property type="gene ID" value="ENSG00000229117.9"/>
</dbReference>
<dbReference type="Ensembl" id="ENST00000546591.6">
    <property type="protein sequence ID" value="ENSP00000449026.1"/>
    <property type="gene ID" value="ENSG00000229117.9"/>
</dbReference>
<dbReference type="GeneID" id="6171"/>
<dbReference type="KEGG" id="hsa:6171"/>
<dbReference type="MANE-Select" id="ENST00000546591.6">
    <property type="protein sequence ID" value="ENSP00000449026.1"/>
    <property type="RefSeq nucleotide sequence ID" value="NM_001035267.2"/>
    <property type="RefSeq protein sequence ID" value="NP_001030344.1"/>
</dbReference>
<dbReference type="UCSC" id="uc001sjn.3">
    <property type="organism name" value="human"/>
</dbReference>
<dbReference type="AGR" id="HGNC:10354"/>
<dbReference type="CTD" id="6171"/>
<dbReference type="DisGeNET" id="6171"/>
<dbReference type="GeneCards" id="RPL41"/>
<dbReference type="HGNC" id="HGNC:10354">
    <property type="gene designation" value="RPL41"/>
</dbReference>
<dbReference type="HPA" id="ENSG00000229117">
    <property type="expression patterns" value="Low tissue specificity"/>
</dbReference>
<dbReference type="MIM" id="613315">
    <property type="type" value="gene"/>
</dbReference>
<dbReference type="neXtProt" id="NX_P62945"/>
<dbReference type="OpenTargets" id="ENSG00000229117"/>
<dbReference type="PharmGKB" id="PA34750"/>
<dbReference type="VEuPathDB" id="HostDB:ENSG00000229117"/>
<dbReference type="eggNOG" id="ENOG502TM1J">
    <property type="taxonomic scope" value="Eukaryota"/>
</dbReference>
<dbReference type="GeneTree" id="ENSGT01060000249814"/>
<dbReference type="HOGENOM" id="CLU_220499_1_0_1"/>
<dbReference type="InParanoid" id="P62945"/>
<dbReference type="PAN-GO" id="P62945">
    <property type="GO annotations" value="2 GO annotations based on evolutionary models"/>
</dbReference>
<dbReference type="PathwayCommons" id="P62945"/>
<dbReference type="Reactome" id="R-HSA-156827">
    <property type="pathway name" value="L13a-mediated translational silencing of Ceruloplasmin expression"/>
</dbReference>
<dbReference type="Reactome" id="R-HSA-156902">
    <property type="pathway name" value="Peptide chain elongation"/>
</dbReference>
<dbReference type="Reactome" id="R-HSA-1799339">
    <property type="pathway name" value="SRP-dependent cotranslational protein targeting to membrane"/>
</dbReference>
<dbReference type="Reactome" id="R-HSA-192823">
    <property type="pathway name" value="Viral mRNA Translation"/>
</dbReference>
<dbReference type="Reactome" id="R-HSA-2408557">
    <property type="pathway name" value="Selenocysteine synthesis"/>
</dbReference>
<dbReference type="Reactome" id="R-HSA-6791226">
    <property type="pathway name" value="Major pathway of rRNA processing in the nucleolus and cytosol"/>
</dbReference>
<dbReference type="Reactome" id="R-HSA-72689">
    <property type="pathway name" value="Formation of a pool of free 40S subunits"/>
</dbReference>
<dbReference type="Reactome" id="R-HSA-72706">
    <property type="pathway name" value="GTP hydrolysis and joining of the 60S ribosomal subunit"/>
</dbReference>
<dbReference type="Reactome" id="R-HSA-72764">
    <property type="pathway name" value="Eukaryotic Translation Termination"/>
</dbReference>
<dbReference type="Reactome" id="R-HSA-9010553">
    <property type="pathway name" value="Regulation of expression of SLITs and ROBOs"/>
</dbReference>
<dbReference type="Reactome" id="R-HSA-9633012">
    <property type="pathway name" value="Response of EIF2AK4 (GCN2) to amino acid deficiency"/>
</dbReference>
<dbReference type="Reactome" id="R-HSA-975956">
    <property type="pathway name" value="Nonsense Mediated Decay (NMD) independent of the Exon Junction Complex (EJC)"/>
</dbReference>
<dbReference type="Reactome" id="R-HSA-975957">
    <property type="pathway name" value="Nonsense Mediated Decay (NMD) enhanced by the Exon Junction Complex (EJC)"/>
</dbReference>
<dbReference type="SignaLink" id="P62945"/>
<dbReference type="SIGNOR" id="P62945"/>
<dbReference type="BioGRID-ORCS" id="6171">
    <property type="hits" value="340 hits in 638 CRISPR screens"/>
</dbReference>
<dbReference type="ChiTaRS" id="RPL41">
    <property type="organism name" value="human"/>
</dbReference>
<dbReference type="EvolutionaryTrace" id="P62945"/>
<dbReference type="GeneWiki" id="60S_ribosomal_protein_L41"/>
<dbReference type="GenomeRNAi" id="6171"/>
<dbReference type="Pharos" id="P62945">
    <property type="development level" value="Tbio"/>
</dbReference>
<dbReference type="PRO" id="PR:P62945"/>
<dbReference type="Proteomes" id="UP000005640">
    <property type="component" value="Chromosome 12"/>
</dbReference>
<dbReference type="Bgee" id="ENSG00000229117">
    <property type="expression patterns" value="Expressed in left ovary and 98 other cell types or tissues"/>
</dbReference>
<dbReference type="GO" id="GO:0005737">
    <property type="term" value="C:cytoplasm"/>
    <property type="evidence" value="ECO:0000303"/>
    <property type="project" value="ComplexPortal"/>
</dbReference>
<dbReference type="GO" id="GO:0005829">
    <property type="term" value="C:cytosol"/>
    <property type="evidence" value="ECO:0000304"/>
    <property type="project" value="Reactome"/>
</dbReference>
<dbReference type="GO" id="GO:0022625">
    <property type="term" value="C:cytosolic large ribosomal subunit"/>
    <property type="evidence" value="ECO:0000314"/>
    <property type="project" value="UniProtKB"/>
</dbReference>
<dbReference type="GO" id="GO:0005783">
    <property type="term" value="C:endoplasmic reticulum"/>
    <property type="evidence" value="ECO:0000314"/>
    <property type="project" value="HPA"/>
</dbReference>
<dbReference type="GO" id="GO:0003730">
    <property type="term" value="F:mRNA 3'-UTR binding"/>
    <property type="evidence" value="ECO:0000314"/>
    <property type="project" value="CAFA"/>
</dbReference>
<dbReference type="GO" id="GO:0048027">
    <property type="term" value="F:mRNA 5'-UTR binding"/>
    <property type="evidence" value="ECO:0000314"/>
    <property type="project" value="CAFA"/>
</dbReference>
<dbReference type="GO" id="GO:0003723">
    <property type="term" value="F:RNA binding"/>
    <property type="evidence" value="ECO:0000304"/>
    <property type="project" value="ProtInc"/>
</dbReference>
<dbReference type="GO" id="GO:0003735">
    <property type="term" value="F:structural constituent of ribosome"/>
    <property type="evidence" value="ECO:0000304"/>
    <property type="project" value="ProtInc"/>
</dbReference>
<dbReference type="GO" id="GO:0002181">
    <property type="term" value="P:cytoplasmic translation"/>
    <property type="evidence" value="ECO:0000314"/>
    <property type="project" value="UniProtKB"/>
</dbReference>
<dbReference type="GO" id="GO:0006412">
    <property type="term" value="P:translation"/>
    <property type="evidence" value="ECO:0000304"/>
    <property type="project" value="ProtInc"/>
</dbReference>
<dbReference type="InterPro" id="IPR007836">
    <property type="entry name" value="Ribosomal_eS32"/>
</dbReference>
<dbReference type="Pfam" id="PF05162">
    <property type="entry name" value="Ribosomal_L41"/>
    <property type="match status" value="1"/>
</dbReference>